<name>BTBDJ_HUMAN</name>
<accession>C9JJ37</accession>
<accession>B4E384</accession>
<accession>B7ZC36</accession>
<accession>B7ZC37</accession>
<feature type="chain" id="PRO_0000394239" description="BTB/POZ domain-containing protein 19">
    <location>
        <begin position="1"/>
        <end position="291"/>
    </location>
</feature>
<feature type="domain" description="BTB" evidence="1">
    <location>
        <begin position="29"/>
        <end position="98"/>
    </location>
</feature>
<feature type="domain" description="BACK">
    <location>
        <begin position="134"/>
        <end position="234"/>
    </location>
</feature>
<feature type="splice variant" id="VSP_039226" description="In isoform 2." evidence="2">
    <original>VAVTFGLGQLQERCVAFIEAHSQEALRTRGFLELSAAALLPLLRSDKLCVDEAELVRAARSWARVGAAVLERPVAEVAAPVVKELRLALLAPAELSALEEQNRQEPLIPVEQIVEAWKCHALRRGDEARGAPCRRRRGTLPREHHRFLDLSFK</original>
    <variation>HFWRPRRADQEVRRSRPSWLTRWP</variation>
    <location>
        <begin position="139"/>
        <end position="291"/>
    </location>
</feature>
<proteinExistence type="evidence at protein level"/>
<dbReference type="EMBL" id="AK304611">
    <property type="protein sequence ID" value="BAG65396.1"/>
    <property type="molecule type" value="mRNA"/>
</dbReference>
<dbReference type="EMBL" id="AL592166">
    <property type="status" value="NOT_ANNOTATED_CDS"/>
    <property type="molecule type" value="Genomic_DNA"/>
</dbReference>
<dbReference type="RefSeq" id="NP_001130009.1">
    <molecule id="C9JJ37-1"/>
    <property type="nucleotide sequence ID" value="NM_001136537.3"/>
</dbReference>
<dbReference type="SMR" id="C9JJ37"/>
<dbReference type="BioGRID" id="127218">
    <property type="interactions" value="1"/>
</dbReference>
<dbReference type="FunCoup" id="C9JJ37">
    <property type="interactions" value="15"/>
</dbReference>
<dbReference type="STRING" id="9606.ENSP00000395461"/>
<dbReference type="iPTMnet" id="C9JJ37"/>
<dbReference type="BioMuta" id="BTBD19"/>
<dbReference type="MassIVE" id="C9JJ37"/>
<dbReference type="PaxDb" id="9606-ENSP00000395461"/>
<dbReference type="PeptideAtlas" id="C9JJ37"/>
<dbReference type="Antibodypedia" id="58461">
    <property type="antibodies" value="20 antibodies from 8 providers"/>
</dbReference>
<dbReference type="DNASU" id="149478"/>
<dbReference type="Ensembl" id="ENST00000439563.2">
    <molecule id="C9JJ37-2"/>
    <property type="protein sequence ID" value="ENSP00000410162.2"/>
    <property type="gene ID" value="ENSG00000222009.10"/>
</dbReference>
<dbReference type="Ensembl" id="ENST00000450269.6">
    <molecule id="C9JJ37-1"/>
    <property type="protein sequence ID" value="ENSP00000395461.1"/>
    <property type="gene ID" value="ENSG00000222009.10"/>
</dbReference>
<dbReference type="GeneID" id="149478"/>
<dbReference type="KEGG" id="hsa:149478"/>
<dbReference type="MANE-Select" id="ENST00000450269.6">
    <property type="protein sequence ID" value="ENSP00000395461.1"/>
    <property type="RefSeq nucleotide sequence ID" value="NM_001136537.3"/>
    <property type="RefSeq protein sequence ID" value="NP_001130009.1"/>
</dbReference>
<dbReference type="UCSC" id="uc010ole.1">
    <molecule id="C9JJ37-1"/>
    <property type="organism name" value="human"/>
</dbReference>
<dbReference type="AGR" id="HGNC:27145"/>
<dbReference type="CTD" id="149478"/>
<dbReference type="GeneCards" id="BTBD19"/>
<dbReference type="HGNC" id="HGNC:27145">
    <property type="gene designation" value="BTBD19"/>
</dbReference>
<dbReference type="HPA" id="ENSG00000222009">
    <property type="expression patterns" value="Low tissue specificity"/>
</dbReference>
<dbReference type="neXtProt" id="NX_C9JJ37"/>
<dbReference type="OpenTargets" id="ENSG00000222009"/>
<dbReference type="PharmGKB" id="PA165750488"/>
<dbReference type="VEuPathDB" id="HostDB:ENSG00000222009"/>
<dbReference type="eggNOG" id="KOG4350">
    <property type="taxonomic scope" value="Eukaryota"/>
</dbReference>
<dbReference type="GeneTree" id="ENSGT00940000162133"/>
<dbReference type="HOGENOM" id="CLU_077764_0_0_1"/>
<dbReference type="InParanoid" id="C9JJ37"/>
<dbReference type="OMA" id="AWRFHAL"/>
<dbReference type="OrthoDB" id="45365at2759"/>
<dbReference type="PAN-GO" id="C9JJ37">
    <property type="GO annotations" value="0 GO annotations based on evolutionary models"/>
</dbReference>
<dbReference type="PhylomeDB" id="C9JJ37"/>
<dbReference type="TreeFam" id="TF330633"/>
<dbReference type="PathwayCommons" id="C9JJ37"/>
<dbReference type="BioGRID-ORCS" id="149478">
    <property type="hits" value="9 hits in 323 CRISPR screens"/>
</dbReference>
<dbReference type="GenomeRNAi" id="149478"/>
<dbReference type="Pharos" id="C9JJ37">
    <property type="development level" value="Tdark"/>
</dbReference>
<dbReference type="PRO" id="PR:C9JJ37"/>
<dbReference type="Proteomes" id="UP000005640">
    <property type="component" value="Chromosome 1"/>
</dbReference>
<dbReference type="RNAct" id="C9JJ37">
    <property type="molecule type" value="protein"/>
</dbReference>
<dbReference type="Bgee" id="ENSG00000222009">
    <property type="expression patterns" value="Expressed in left uterine tube and 118 other cell types or tissues"/>
</dbReference>
<dbReference type="ExpressionAtlas" id="C9JJ37">
    <property type="expression patterns" value="baseline and differential"/>
</dbReference>
<dbReference type="CDD" id="cd18494">
    <property type="entry name" value="BACK_BTBD19"/>
    <property type="match status" value="1"/>
</dbReference>
<dbReference type="CDD" id="cd18294">
    <property type="entry name" value="BTB_POZ_BTBD19"/>
    <property type="match status" value="1"/>
</dbReference>
<dbReference type="Gene3D" id="1.25.40.420">
    <property type="match status" value="1"/>
</dbReference>
<dbReference type="Gene3D" id="3.30.710.10">
    <property type="entry name" value="Potassium Channel Kv1.1, Chain A"/>
    <property type="match status" value="1"/>
</dbReference>
<dbReference type="InterPro" id="IPR011705">
    <property type="entry name" value="BACK"/>
</dbReference>
<dbReference type="InterPro" id="IPR000210">
    <property type="entry name" value="BTB/POZ_dom"/>
</dbReference>
<dbReference type="InterPro" id="IPR042846">
    <property type="entry name" value="BTBD19"/>
</dbReference>
<dbReference type="InterPro" id="IPR011333">
    <property type="entry name" value="SKP1/BTB/POZ_sf"/>
</dbReference>
<dbReference type="PANTHER" id="PTHR46965">
    <property type="entry name" value="BTB/POZ DOMAIN-CONTAINING PROTEIN 19"/>
    <property type="match status" value="1"/>
</dbReference>
<dbReference type="PANTHER" id="PTHR46965:SF1">
    <property type="entry name" value="BTB_POZ DOMAIN-CONTAINING PROTEIN 19"/>
    <property type="match status" value="1"/>
</dbReference>
<dbReference type="Pfam" id="PF07707">
    <property type="entry name" value="BACK"/>
    <property type="match status" value="1"/>
</dbReference>
<dbReference type="Pfam" id="PF00651">
    <property type="entry name" value="BTB"/>
    <property type="match status" value="1"/>
</dbReference>
<dbReference type="SMART" id="SM00875">
    <property type="entry name" value="BACK"/>
    <property type="match status" value="1"/>
</dbReference>
<dbReference type="SMART" id="SM00225">
    <property type="entry name" value="BTB"/>
    <property type="match status" value="1"/>
</dbReference>
<dbReference type="SUPFAM" id="SSF54695">
    <property type="entry name" value="POZ domain"/>
    <property type="match status" value="1"/>
</dbReference>
<dbReference type="PROSITE" id="PS50097">
    <property type="entry name" value="BTB"/>
    <property type="match status" value="1"/>
</dbReference>
<comment type="alternative products">
    <event type="alternative splicing"/>
    <isoform>
        <id>C9JJ37-1</id>
        <name>1</name>
        <sequence type="displayed"/>
    </isoform>
    <isoform>
        <id>C9JJ37-2</id>
        <name>2</name>
        <sequence type="described" ref="VSP_039226"/>
    </isoform>
</comment>
<evidence type="ECO:0000255" key="1">
    <source>
        <dbReference type="PROSITE-ProRule" id="PRU00037"/>
    </source>
</evidence>
<evidence type="ECO:0000303" key="2">
    <source>
    </source>
</evidence>
<gene>
    <name type="primary">BTBD19</name>
</gene>
<organism>
    <name type="scientific">Homo sapiens</name>
    <name type="common">Human</name>
    <dbReference type="NCBI Taxonomy" id="9606"/>
    <lineage>
        <taxon>Eukaryota</taxon>
        <taxon>Metazoa</taxon>
        <taxon>Chordata</taxon>
        <taxon>Craniata</taxon>
        <taxon>Vertebrata</taxon>
        <taxon>Euteleostomi</taxon>
        <taxon>Mammalia</taxon>
        <taxon>Eutheria</taxon>
        <taxon>Euarchontoglires</taxon>
        <taxon>Primates</taxon>
        <taxon>Haplorrhini</taxon>
        <taxon>Catarrhini</taxon>
        <taxon>Hominidae</taxon>
        <taxon>Homo</taxon>
    </lineage>
</organism>
<keyword id="KW-0025">Alternative splicing</keyword>
<keyword id="KW-1267">Proteomics identification</keyword>
<keyword id="KW-1185">Reference proteome</keyword>
<reference key="1">
    <citation type="journal article" date="2004" name="Nat. Genet.">
        <title>Complete sequencing and characterization of 21,243 full-length human cDNAs.</title>
        <authorList>
            <person name="Ota T."/>
            <person name="Suzuki Y."/>
            <person name="Nishikawa T."/>
            <person name="Otsuki T."/>
            <person name="Sugiyama T."/>
            <person name="Irie R."/>
            <person name="Wakamatsu A."/>
            <person name="Hayashi K."/>
            <person name="Sato H."/>
            <person name="Nagai K."/>
            <person name="Kimura K."/>
            <person name="Makita H."/>
            <person name="Sekine M."/>
            <person name="Obayashi M."/>
            <person name="Nishi T."/>
            <person name="Shibahara T."/>
            <person name="Tanaka T."/>
            <person name="Ishii S."/>
            <person name="Yamamoto J."/>
            <person name="Saito K."/>
            <person name="Kawai Y."/>
            <person name="Isono Y."/>
            <person name="Nakamura Y."/>
            <person name="Nagahari K."/>
            <person name="Murakami K."/>
            <person name="Yasuda T."/>
            <person name="Iwayanagi T."/>
            <person name="Wagatsuma M."/>
            <person name="Shiratori A."/>
            <person name="Sudo H."/>
            <person name="Hosoiri T."/>
            <person name="Kaku Y."/>
            <person name="Kodaira H."/>
            <person name="Kondo H."/>
            <person name="Sugawara M."/>
            <person name="Takahashi M."/>
            <person name="Kanda K."/>
            <person name="Yokoi T."/>
            <person name="Furuya T."/>
            <person name="Kikkawa E."/>
            <person name="Omura Y."/>
            <person name="Abe K."/>
            <person name="Kamihara K."/>
            <person name="Katsuta N."/>
            <person name="Sato K."/>
            <person name="Tanikawa M."/>
            <person name="Yamazaki M."/>
            <person name="Ninomiya K."/>
            <person name="Ishibashi T."/>
            <person name="Yamashita H."/>
            <person name="Murakawa K."/>
            <person name="Fujimori K."/>
            <person name="Tanai H."/>
            <person name="Kimata M."/>
            <person name="Watanabe M."/>
            <person name="Hiraoka S."/>
            <person name="Chiba Y."/>
            <person name="Ishida S."/>
            <person name="Ono Y."/>
            <person name="Takiguchi S."/>
            <person name="Watanabe S."/>
            <person name="Yosida M."/>
            <person name="Hotuta T."/>
            <person name="Kusano J."/>
            <person name="Kanehori K."/>
            <person name="Takahashi-Fujii A."/>
            <person name="Hara H."/>
            <person name="Tanase T.-O."/>
            <person name="Nomura Y."/>
            <person name="Togiya S."/>
            <person name="Komai F."/>
            <person name="Hara R."/>
            <person name="Takeuchi K."/>
            <person name="Arita M."/>
            <person name="Imose N."/>
            <person name="Musashino K."/>
            <person name="Yuuki H."/>
            <person name="Oshima A."/>
            <person name="Sasaki N."/>
            <person name="Aotsuka S."/>
            <person name="Yoshikawa Y."/>
            <person name="Matsunawa H."/>
            <person name="Ichihara T."/>
            <person name="Shiohata N."/>
            <person name="Sano S."/>
            <person name="Moriya S."/>
            <person name="Momiyama H."/>
            <person name="Satoh N."/>
            <person name="Takami S."/>
            <person name="Terashima Y."/>
            <person name="Suzuki O."/>
            <person name="Nakagawa S."/>
            <person name="Senoh A."/>
            <person name="Mizoguchi H."/>
            <person name="Goto Y."/>
            <person name="Shimizu F."/>
            <person name="Wakebe H."/>
            <person name="Hishigaki H."/>
            <person name="Watanabe T."/>
            <person name="Sugiyama A."/>
            <person name="Takemoto M."/>
            <person name="Kawakami B."/>
            <person name="Yamazaki M."/>
            <person name="Watanabe K."/>
            <person name="Kumagai A."/>
            <person name="Itakura S."/>
            <person name="Fukuzumi Y."/>
            <person name="Fujimori Y."/>
            <person name="Komiyama M."/>
            <person name="Tashiro H."/>
            <person name="Tanigami A."/>
            <person name="Fujiwara T."/>
            <person name="Ono T."/>
            <person name="Yamada K."/>
            <person name="Fujii Y."/>
            <person name="Ozaki K."/>
            <person name="Hirao M."/>
            <person name="Ohmori Y."/>
            <person name="Kawabata A."/>
            <person name="Hikiji T."/>
            <person name="Kobatake N."/>
            <person name="Inagaki H."/>
            <person name="Ikema Y."/>
            <person name="Okamoto S."/>
            <person name="Okitani R."/>
            <person name="Kawakami T."/>
            <person name="Noguchi S."/>
            <person name="Itoh T."/>
            <person name="Shigeta K."/>
            <person name="Senba T."/>
            <person name="Matsumura K."/>
            <person name="Nakajima Y."/>
            <person name="Mizuno T."/>
            <person name="Morinaga M."/>
            <person name="Sasaki M."/>
            <person name="Togashi T."/>
            <person name="Oyama M."/>
            <person name="Hata H."/>
            <person name="Watanabe M."/>
            <person name="Komatsu T."/>
            <person name="Mizushima-Sugano J."/>
            <person name="Satoh T."/>
            <person name="Shirai Y."/>
            <person name="Takahashi Y."/>
            <person name="Nakagawa K."/>
            <person name="Okumura K."/>
            <person name="Nagase T."/>
            <person name="Nomura N."/>
            <person name="Kikuchi H."/>
            <person name="Masuho Y."/>
            <person name="Yamashita R."/>
            <person name="Nakai K."/>
            <person name="Yada T."/>
            <person name="Nakamura Y."/>
            <person name="Ohara O."/>
            <person name="Isogai T."/>
            <person name="Sugano S."/>
        </authorList>
    </citation>
    <scope>NUCLEOTIDE SEQUENCE [LARGE SCALE MRNA] (ISOFORM 2)</scope>
    <source>
        <tissue>Uterus</tissue>
    </source>
</reference>
<reference key="2">
    <citation type="journal article" date="2006" name="Nature">
        <title>The DNA sequence and biological annotation of human chromosome 1.</title>
        <authorList>
            <person name="Gregory S.G."/>
            <person name="Barlow K.F."/>
            <person name="McLay K.E."/>
            <person name="Kaul R."/>
            <person name="Swarbreck D."/>
            <person name="Dunham A."/>
            <person name="Scott C.E."/>
            <person name="Howe K.L."/>
            <person name="Woodfine K."/>
            <person name="Spencer C.C.A."/>
            <person name="Jones M.C."/>
            <person name="Gillson C."/>
            <person name="Searle S."/>
            <person name="Zhou Y."/>
            <person name="Kokocinski F."/>
            <person name="McDonald L."/>
            <person name="Evans R."/>
            <person name="Phillips K."/>
            <person name="Atkinson A."/>
            <person name="Cooper R."/>
            <person name="Jones C."/>
            <person name="Hall R.E."/>
            <person name="Andrews T.D."/>
            <person name="Lloyd C."/>
            <person name="Ainscough R."/>
            <person name="Almeida J.P."/>
            <person name="Ambrose K.D."/>
            <person name="Anderson F."/>
            <person name="Andrew R.W."/>
            <person name="Ashwell R.I.S."/>
            <person name="Aubin K."/>
            <person name="Babbage A.K."/>
            <person name="Bagguley C.L."/>
            <person name="Bailey J."/>
            <person name="Beasley H."/>
            <person name="Bethel G."/>
            <person name="Bird C.P."/>
            <person name="Bray-Allen S."/>
            <person name="Brown J.Y."/>
            <person name="Brown A.J."/>
            <person name="Buckley D."/>
            <person name="Burton J."/>
            <person name="Bye J."/>
            <person name="Carder C."/>
            <person name="Chapman J.C."/>
            <person name="Clark S.Y."/>
            <person name="Clarke G."/>
            <person name="Clee C."/>
            <person name="Cobley V."/>
            <person name="Collier R.E."/>
            <person name="Corby N."/>
            <person name="Coville G.J."/>
            <person name="Davies J."/>
            <person name="Deadman R."/>
            <person name="Dunn M."/>
            <person name="Earthrowl M."/>
            <person name="Ellington A.G."/>
            <person name="Errington H."/>
            <person name="Frankish A."/>
            <person name="Frankland J."/>
            <person name="French L."/>
            <person name="Garner P."/>
            <person name="Garnett J."/>
            <person name="Gay L."/>
            <person name="Ghori M.R.J."/>
            <person name="Gibson R."/>
            <person name="Gilby L.M."/>
            <person name="Gillett W."/>
            <person name="Glithero R.J."/>
            <person name="Grafham D.V."/>
            <person name="Griffiths C."/>
            <person name="Griffiths-Jones S."/>
            <person name="Grocock R."/>
            <person name="Hammond S."/>
            <person name="Harrison E.S.I."/>
            <person name="Hart E."/>
            <person name="Haugen E."/>
            <person name="Heath P.D."/>
            <person name="Holmes S."/>
            <person name="Holt K."/>
            <person name="Howden P.J."/>
            <person name="Hunt A.R."/>
            <person name="Hunt S.E."/>
            <person name="Hunter G."/>
            <person name="Isherwood J."/>
            <person name="James R."/>
            <person name="Johnson C."/>
            <person name="Johnson D."/>
            <person name="Joy A."/>
            <person name="Kay M."/>
            <person name="Kershaw J.K."/>
            <person name="Kibukawa M."/>
            <person name="Kimberley A.M."/>
            <person name="King A."/>
            <person name="Knights A.J."/>
            <person name="Lad H."/>
            <person name="Laird G."/>
            <person name="Lawlor S."/>
            <person name="Leongamornlert D.A."/>
            <person name="Lloyd D.M."/>
            <person name="Loveland J."/>
            <person name="Lovell J."/>
            <person name="Lush M.J."/>
            <person name="Lyne R."/>
            <person name="Martin S."/>
            <person name="Mashreghi-Mohammadi M."/>
            <person name="Matthews L."/>
            <person name="Matthews N.S.W."/>
            <person name="McLaren S."/>
            <person name="Milne S."/>
            <person name="Mistry S."/>
            <person name="Moore M.J.F."/>
            <person name="Nickerson T."/>
            <person name="O'Dell C.N."/>
            <person name="Oliver K."/>
            <person name="Palmeiri A."/>
            <person name="Palmer S.A."/>
            <person name="Parker A."/>
            <person name="Patel D."/>
            <person name="Pearce A.V."/>
            <person name="Peck A.I."/>
            <person name="Pelan S."/>
            <person name="Phelps K."/>
            <person name="Phillimore B.J."/>
            <person name="Plumb R."/>
            <person name="Rajan J."/>
            <person name="Raymond C."/>
            <person name="Rouse G."/>
            <person name="Saenphimmachak C."/>
            <person name="Sehra H.K."/>
            <person name="Sheridan E."/>
            <person name="Shownkeen R."/>
            <person name="Sims S."/>
            <person name="Skuce C.D."/>
            <person name="Smith M."/>
            <person name="Steward C."/>
            <person name="Subramanian S."/>
            <person name="Sycamore N."/>
            <person name="Tracey A."/>
            <person name="Tromans A."/>
            <person name="Van Helmond Z."/>
            <person name="Wall M."/>
            <person name="Wallis J.M."/>
            <person name="White S."/>
            <person name="Whitehead S.L."/>
            <person name="Wilkinson J.E."/>
            <person name="Willey D.L."/>
            <person name="Williams H."/>
            <person name="Wilming L."/>
            <person name="Wray P.W."/>
            <person name="Wu Z."/>
            <person name="Coulson A."/>
            <person name="Vaudin M."/>
            <person name="Sulston J.E."/>
            <person name="Durbin R.M."/>
            <person name="Hubbard T."/>
            <person name="Wooster R."/>
            <person name="Dunham I."/>
            <person name="Carter N.P."/>
            <person name="McVean G."/>
            <person name="Ross M.T."/>
            <person name="Harrow J."/>
            <person name="Olson M.V."/>
            <person name="Beck S."/>
            <person name="Rogers J."/>
            <person name="Bentley D.R."/>
        </authorList>
    </citation>
    <scope>NUCLEOTIDE SEQUENCE [LARGE SCALE GENOMIC DNA]</scope>
</reference>
<protein>
    <recommendedName>
        <fullName>BTB/POZ domain-containing protein 19</fullName>
    </recommendedName>
</protein>
<sequence length="291" mass="32365">MEPLGLVVHGKAEPFSAALRSLVNNPRYSDVCFVVGQERQEVFAHRCLLACRCNFFQRLLGTEPGPGVPSPVVLSTVPTEAFLAVLEFLYTNSVKLYRHSVLEVLTAAVEYGLEELRELCLQFVVKVLDVDLVCEALQVAVTFGLGQLQERCVAFIEAHSQEALRTRGFLELSAAALLPLLRSDKLCVDEAELVRAARSWARVGAAVLERPVAEVAAPVVKELRLALLAPAELSALEEQNRQEPLIPVEQIVEAWKCHALRRGDEARGAPCRRRRGTLPREHHRFLDLSFK</sequence>